<accession>O87734</accession>
<feature type="chain" id="PRO_0000125747" description="Large ribosomal subunit protein uL1">
    <location>
        <begin position="1"/>
        <end position="64" status="greater than"/>
    </location>
</feature>
<feature type="non-terminal residue">
    <location>
        <position position="64"/>
    </location>
</feature>
<reference key="1">
    <citation type="journal article" date="1998" name="Int. J. Syst. Bacteriol.">
        <title>Comparative ribosomal protein (L11 and L30) sequence analyses of several Streptomyces spp. commonly used in genetic studies.</title>
        <authorList>
            <person name="Kawamoto S."/>
            <person name="Ochi K."/>
        </authorList>
    </citation>
    <scope>NUCLEOTIDE SEQUENCE [GENOMIC DNA]</scope>
    <source>
        <strain>MA406 A-1</strain>
    </source>
</reference>
<gene>
    <name type="primary">rplA</name>
</gene>
<proteinExistence type="inferred from homology"/>
<sequence length="64" mass="7164">MKRSKTLRAADAKVDREKLYAPLEAVRLAKETSTTKFDATVEVAFRLGVDPRKADQMVRGTVNL</sequence>
<evidence type="ECO:0000250" key="1"/>
<evidence type="ECO:0000305" key="2"/>
<dbReference type="EMBL" id="D87847">
    <property type="protein sequence ID" value="BAA31977.1"/>
    <property type="molecule type" value="Genomic_DNA"/>
</dbReference>
<dbReference type="SMR" id="O87734"/>
<dbReference type="GO" id="GO:1990904">
    <property type="term" value="C:ribonucleoprotein complex"/>
    <property type="evidence" value="ECO:0007669"/>
    <property type="project" value="UniProtKB-KW"/>
</dbReference>
<dbReference type="GO" id="GO:0005840">
    <property type="term" value="C:ribosome"/>
    <property type="evidence" value="ECO:0007669"/>
    <property type="project" value="UniProtKB-KW"/>
</dbReference>
<dbReference type="GO" id="GO:0019843">
    <property type="term" value="F:rRNA binding"/>
    <property type="evidence" value="ECO:0007669"/>
    <property type="project" value="UniProtKB-KW"/>
</dbReference>
<dbReference type="GO" id="GO:0000049">
    <property type="term" value="F:tRNA binding"/>
    <property type="evidence" value="ECO:0007669"/>
    <property type="project" value="UniProtKB-KW"/>
</dbReference>
<dbReference type="GO" id="GO:0006417">
    <property type="term" value="P:regulation of translation"/>
    <property type="evidence" value="ECO:0007669"/>
    <property type="project" value="UniProtKB-KW"/>
</dbReference>
<dbReference type="Gene3D" id="3.30.190.20">
    <property type="match status" value="1"/>
</dbReference>
<dbReference type="InterPro" id="IPR023674">
    <property type="entry name" value="Ribosomal_uL1-like"/>
</dbReference>
<dbReference type="PANTHER" id="PTHR36427">
    <property type="entry name" value="54S RIBOSOMAL PROTEIN L1, MITOCHONDRIAL"/>
    <property type="match status" value="1"/>
</dbReference>
<dbReference type="PANTHER" id="PTHR36427:SF3">
    <property type="entry name" value="LARGE RIBOSOMAL SUBUNIT PROTEIN UL1M"/>
    <property type="match status" value="1"/>
</dbReference>
<dbReference type="SUPFAM" id="SSF56808">
    <property type="entry name" value="Ribosomal protein L1"/>
    <property type="match status" value="1"/>
</dbReference>
<keyword id="KW-0678">Repressor</keyword>
<keyword id="KW-0687">Ribonucleoprotein</keyword>
<keyword id="KW-0689">Ribosomal protein</keyword>
<keyword id="KW-0694">RNA-binding</keyword>
<keyword id="KW-0699">rRNA-binding</keyword>
<keyword id="KW-0810">Translation regulation</keyword>
<keyword id="KW-0820">tRNA-binding</keyword>
<protein>
    <recommendedName>
        <fullName evidence="2">Large ribosomal subunit protein uL1</fullName>
    </recommendedName>
    <alternativeName>
        <fullName>50S ribosomal protein L1</fullName>
    </alternativeName>
</protein>
<organism>
    <name type="scientific">Streptomyces lavendulae</name>
    <dbReference type="NCBI Taxonomy" id="1914"/>
    <lineage>
        <taxon>Bacteria</taxon>
        <taxon>Bacillati</taxon>
        <taxon>Actinomycetota</taxon>
        <taxon>Actinomycetes</taxon>
        <taxon>Kitasatosporales</taxon>
        <taxon>Streptomycetaceae</taxon>
        <taxon>Streptomyces</taxon>
    </lineage>
</organism>
<name>RL1_STRLA</name>
<comment type="function">
    <text evidence="1">Binds directly to 23S rRNA. The L1 stalk is quite mobile in the ribosome, and is involved in E site tRNA release (By similarity).</text>
</comment>
<comment type="function">
    <text evidence="1">Protein L1 is also a translational repressor protein, it controls the translation of the L11 operon by binding to its mRNA.</text>
</comment>
<comment type="subunit">
    <text evidence="1">Part of the 50S ribosomal subunit.</text>
</comment>
<comment type="similarity">
    <text evidence="2">Belongs to the universal ribosomal protein uL1 family.</text>
</comment>